<protein>
    <recommendedName>
        <fullName evidence="3">Methanethiol oxidase</fullName>
        <shortName evidence="3">MTO</shortName>
        <ecNumber evidence="2">1.8.3.4</ecNumber>
    </recommendedName>
</protein>
<organism>
    <name type="scientific">Ruegeria pomeroyi (strain ATCC 700808 / DSM 15171 / DSS-3)</name>
    <name type="common">Silicibacter pomeroyi</name>
    <dbReference type="NCBI Taxonomy" id="246200"/>
    <lineage>
        <taxon>Bacteria</taxon>
        <taxon>Pseudomonadati</taxon>
        <taxon>Pseudomonadota</taxon>
        <taxon>Alphaproteobacteria</taxon>
        <taxon>Rhodobacterales</taxon>
        <taxon>Roseobacteraceae</taxon>
        <taxon>Ruegeria</taxon>
    </lineage>
</organism>
<proteinExistence type="evidence at protein level"/>
<reference key="1">
    <citation type="journal article" date="2004" name="Nature">
        <title>Genome sequence of Silicibacter pomeroyi reveals adaptations to the marine environment.</title>
        <authorList>
            <person name="Moran M.A."/>
            <person name="Buchan A."/>
            <person name="Gonzalez J.M."/>
            <person name="Heidelberg J.F."/>
            <person name="Whitman W.B."/>
            <person name="Kiene R.P."/>
            <person name="Henriksen J.R."/>
            <person name="King G.M."/>
            <person name="Belas R."/>
            <person name="Fuqua C."/>
            <person name="Brinkac L.M."/>
            <person name="Lewis M."/>
            <person name="Johri S."/>
            <person name="Weaver B."/>
            <person name="Pai G."/>
            <person name="Eisen J.A."/>
            <person name="Rahe E."/>
            <person name="Sheldon W.M."/>
            <person name="Ye W."/>
            <person name="Miller T.R."/>
            <person name="Carlton J."/>
            <person name="Rasko D.A."/>
            <person name="Paulsen I.T."/>
            <person name="Ren Q."/>
            <person name="Daugherty S.C."/>
            <person name="DeBoy R.T."/>
            <person name="Dodson R.J."/>
            <person name="Durkin A.S."/>
            <person name="Madupu R."/>
            <person name="Nelson W.C."/>
            <person name="Sullivan S.A."/>
            <person name="Rosovitz M.J."/>
            <person name="Haft D.H."/>
            <person name="Selengut J."/>
            <person name="Ward N."/>
        </authorList>
    </citation>
    <scope>NUCLEOTIDE SEQUENCE [LARGE SCALE GENOMIC DNA]</scope>
    <source>
        <strain>ATCC 700808 / DSM 15171 / DSS-3</strain>
    </source>
</reference>
<reference key="2">
    <citation type="journal article" date="2014" name="Stand. Genomic Sci.">
        <title>An updated genome annotation for the model marine bacterium Ruegeria pomeroyi DSS-3.</title>
        <authorList>
            <person name="Rivers A.R."/>
            <person name="Smith C.B."/>
            <person name="Moran M.A."/>
        </authorList>
    </citation>
    <scope>GENOME REANNOTATION</scope>
    <source>
        <strain>ATCC 700808 / DSM 15171 / DSS-3</strain>
    </source>
</reference>
<reference key="3">
    <citation type="journal article" date="2018" name="ISME J.">
        <title>Bacterial SBP56 identified as a Cu-dependent methanethiol oxidase widely distributed in the biosphere.</title>
        <authorList>
            <person name="Eyice O."/>
            <person name="Myronova N."/>
            <person name="Pol A."/>
            <person name="Carrion O."/>
            <person name="Todd J.D."/>
            <person name="Smith T.J."/>
            <person name="Gurman S.J."/>
            <person name="Cuthbertson A."/>
            <person name="Mazard S."/>
            <person name="Mennink-Kersten M.A."/>
            <person name="Bugg T.D."/>
            <person name="Andersson K.K."/>
            <person name="Johnston A.W."/>
            <person name="Op den Camp H.J."/>
            <person name="Schaefer H."/>
        </authorList>
    </citation>
    <scope>FUNCTION</scope>
    <scope>CATALYTIC ACTIVITY</scope>
    <scope>PATHWAY</scope>
    <scope>INDUCTION</scope>
    <source>
        <strain>ATCC 700808 / DSM 15171 / DSS-3</strain>
    </source>
</reference>
<gene>
    <name evidence="3" type="primary">mtoX</name>
    <name evidence="5" type="ordered locus">SPOA0269</name>
</gene>
<feature type="signal peptide" evidence="1">
    <location>
        <begin position="1"/>
        <end position="24"/>
    </location>
</feature>
<feature type="chain" id="PRO_5004259185" description="Methanethiol oxidase">
    <location>
        <begin position="25"/>
        <end position="436"/>
    </location>
</feature>
<geneLocation type="plasmid">
    <name>megaplasmid Spo</name>
</geneLocation>
<accession>Q5LKW0</accession>
<comment type="function">
    <text evidence="2">Catalyzes the oxidation of methanethiol.</text>
</comment>
<comment type="catalytic activity">
    <reaction evidence="2">
        <text>methanethiol + O2 + H2O = hydrogen sulfide + formaldehyde + H2O2 + H(+)</text>
        <dbReference type="Rhea" id="RHEA:11812"/>
        <dbReference type="ChEBI" id="CHEBI:15377"/>
        <dbReference type="ChEBI" id="CHEBI:15378"/>
        <dbReference type="ChEBI" id="CHEBI:15379"/>
        <dbReference type="ChEBI" id="CHEBI:16007"/>
        <dbReference type="ChEBI" id="CHEBI:16240"/>
        <dbReference type="ChEBI" id="CHEBI:16842"/>
        <dbReference type="ChEBI" id="CHEBI:29919"/>
        <dbReference type="EC" id="1.8.3.4"/>
    </reaction>
</comment>
<comment type="pathway">
    <text evidence="2">Organosulfur degradation.</text>
</comment>
<comment type="subcellular location">
    <subcellularLocation>
        <location evidence="4">Periplasm</location>
    </subcellularLocation>
</comment>
<comment type="induction">
    <text evidence="2">Induced by methanethiol, dimethylsulfoniopropionate (DMSP) and methylmercaptopropionic acid (MMPA).</text>
</comment>
<comment type="similarity">
    <text evidence="4">Belongs to the selenium-binding protein family.</text>
</comment>
<name>MTO_RUEPO</name>
<sequence length="436" mass="48555">MKRREFGALAAGALAMGLPFRAFADETCQSPYMPKITGQEEFVYVWTLGVEGMGDEQDKLVTIDLRPGSATRGQVINSVSVGGRNEAHHGGFSADRRFFWTGGLDTNRIFIFDVHSDPSNPKLHKTIDTFVKDSGGVVGPHTFFALPGSMMITGLSNDDDHGGRTALVEYNDDGEYVATYWMPTADDMQGAVAVGDAVADGYGYDIRALIRKNVMLTSSFTGWSNYMMDFGQMLQDAEAMKRFGNTIVQWDLHTRQPKKVFNVPGAPLEIRFPWGSNANYAFSTTALTSQLWLIYEDDAGEWQAKAVADIGNPADIPLPVDISIAADDQTLWINSFMDGKTRLFDISDPHKPFQIYEKVIDRQVNMVSQSWDGKRVYFSSSLLANWDKKGKDDAQYLKAYNWDGKELVEDFAVDFYELGLGRAHIMRFGSSALYSS</sequence>
<keyword id="KW-0560">Oxidoreductase</keyword>
<keyword id="KW-0574">Periplasm</keyword>
<keyword id="KW-0614">Plasmid</keyword>
<keyword id="KW-1185">Reference proteome</keyword>
<keyword id="KW-0732">Signal</keyword>
<evidence type="ECO:0000255" key="1"/>
<evidence type="ECO:0000269" key="2">
    <source>
    </source>
</evidence>
<evidence type="ECO:0000303" key="3">
    <source>
    </source>
</evidence>
<evidence type="ECO:0000305" key="4"/>
<evidence type="ECO:0000312" key="5">
    <source>
        <dbReference type="EMBL" id="AAV97403.1"/>
    </source>
</evidence>
<dbReference type="EC" id="1.8.3.4" evidence="2"/>
<dbReference type="EMBL" id="CP000032">
    <property type="protein sequence ID" value="AAV97403.1"/>
    <property type="molecule type" value="Genomic_DNA"/>
</dbReference>
<dbReference type="RefSeq" id="WP_011242048.1">
    <property type="nucleotide sequence ID" value="NC_006569.1"/>
</dbReference>
<dbReference type="SMR" id="Q5LKW0"/>
<dbReference type="PaxDb" id="246200-SPOA0269"/>
<dbReference type="KEGG" id="sil:SPOA0269"/>
<dbReference type="eggNOG" id="COG3391">
    <property type="taxonomic scope" value="Bacteria"/>
</dbReference>
<dbReference type="HOGENOM" id="CLU_628344_0_0_5"/>
<dbReference type="OrthoDB" id="9768634at2"/>
<dbReference type="Proteomes" id="UP000001023">
    <property type="component" value="Plasmid megaplasmid"/>
</dbReference>
<dbReference type="GO" id="GO:0042597">
    <property type="term" value="C:periplasmic space"/>
    <property type="evidence" value="ECO:0007669"/>
    <property type="project" value="UniProtKB-SubCell"/>
</dbReference>
<dbReference type="GO" id="GO:0018549">
    <property type="term" value="F:methanethiol oxidase activity"/>
    <property type="evidence" value="ECO:0007669"/>
    <property type="project" value="UniProtKB-EC"/>
</dbReference>
<dbReference type="GO" id="GO:0008430">
    <property type="term" value="F:selenium binding"/>
    <property type="evidence" value="ECO:0007669"/>
    <property type="project" value="InterPro"/>
</dbReference>
<dbReference type="InterPro" id="IPR011044">
    <property type="entry name" value="Quino_amine_DH_bsu"/>
</dbReference>
<dbReference type="InterPro" id="IPR008826">
    <property type="entry name" value="Se-bd"/>
</dbReference>
<dbReference type="PANTHER" id="PTHR23300">
    <property type="entry name" value="METHANETHIOL OXIDASE"/>
    <property type="match status" value="1"/>
</dbReference>
<dbReference type="PANTHER" id="PTHR23300:SF0">
    <property type="entry name" value="METHANETHIOL OXIDASE"/>
    <property type="match status" value="1"/>
</dbReference>
<dbReference type="Pfam" id="PF05694">
    <property type="entry name" value="SBP56"/>
    <property type="match status" value="1"/>
</dbReference>
<dbReference type="SUPFAM" id="SSF50969">
    <property type="entry name" value="YVTN repeat-like/Quinoprotein amine dehydrogenase"/>
    <property type="match status" value="1"/>
</dbReference>